<accession>Q77NN9</accession>
<accession>Q4JQR8</accession>
<protein>
    <recommendedName>
        <fullName>Uncharacterized protein 57</fullName>
    </recommendedName>
    <alternativeName>
        <fullName>Uncharacterized ORF57 protein</fullName>
    </alternativeName>
</protein>
<comment type="similarity">
    <text evidence="1">Belongs to the varicellovirus ORF57 protein family.</text>
</comment>
<evidence type="ECO:0000305" key="1"/>
<organism>
    <name type="scientific">Varicella-zoster virus (strain Oka vaccine)</name>
    <name type="common">HHV-3</name>
    <name type="synonym">Human herpesvirus 3</name>
    <dbReference type="NCBI Taxonomy" id="341980"/>
    <lineage>
        <taxon>Viruses</taxon>
        <taxon>Duplodnaviria</taxon>
        <taxon>Heunggongvirae</taxon>
        <taxon>Peploviricota</taxon>
        <taxon>Herviviricetes</taxon>
        <taxon>Herpesvirales</taxon>
        <taxon>Orthoherpesviridae</taxon>
        <taxon>Alphaherpesvirinae</taxon>
        <taxon>Varicellovirus</taxon>
        <taxon>Varicellovirus humanalpha3</taxon>
        <taxon>Human herpesvirus 3</taxon>
    </lineage>
</organism>
<sequence length="71" mass="8080">MDVRERNVFGNASVATPGEHQKFVRELILSGHNNVVLQTYTGKWSDCRKHGKSVMYNTGEARHPTCKAHQR</sequence>
<name>ORF57_VZVO</name>
<organismHost>
    <name type="scientific">Homo sapiens</name>
    <name type="common">Human</name>
    <dbReference type="NCBI Taxonomy" id="9606"/>
</organismHost>
<gene>
    <name type="ORF">ORF57</name>
</gene>
<reference key="1">
    <citation type="journal article" date="2000" name="J. Infect. Dis.">
        <title>Nucleotide sequences that distinguish Oka vaccine from parental Oka and other varicella-zoster virus isolates.</title>
        <authorList>
            <person name="Argaw T."/>
            <person name="Cohen J.I."/>
            <person name="Klutch M."/>
            <person name="Lekstrom K."/>
            <person name="Yoshikawa T."/>
            <person name="Asano Y."/>
            <person name="Krause P.R."/>
        </authorList>
    </citation>
    <scope>NUCLEOTIDE SEQUENCE [LARGE SCALE GENOMIC DNA]</scope>
    <source>
        <strain>V-Oka(Biken)</strain>
    </source>
</reference>
<reference key="2">
    <citation type="journal article" date="2002" name="J. Virol.">
        <title>Comparison of the complete DNA sequences of the Oka varicella vaccine and its parental virus.</title>
        <authorList>
            <person name="Gomi Y."/>
            <person name="Sunamachi H."/>
            <person name="Mori Y."/>
            <person name="Nagaike K."/>
            <person name="Takahashi M."/>
            <person name="Yamanishi K."/>
        </authorList>
    </citation>
    <scope>NUCLEOTIDE SEQUENCE [LARGE SCALE GENOMIC DNA]</scope>
    <source>
        <strain>Isolate Human/Japan/P-Oka/1970</strain>
        <strain>Oka varicella vaccine Biken (V-Oka-Biken)</strain>
    </source>
</reference>
<reference key="3">
    <citation type="journal article" date="2008" name="J. Virol.">
        <title>Complete DNA sequences of two oka strain varicella-zoster virus genomes.</title>
        <authorList>
            <person name="Tillieux S.L."/>
            <person name="Halsey W.S."/>
            <person name="Thomas E.S."/>
            <person name="Voycik J.J."/>
            <person name="Sathe G.M."/>
            <person name="Vassilev V."/>
        </authorList>
    </citation>
    <scope>NUCLEOTIDE SEQUENCE [LARGE SCALE GENOMIC DNA]</scope>
    <source>
        <strain>Oka varicella vaccine VarilRix (V-Oka-GSK)</strain>
        <strain>Oka varicella vaccine Varivax (V-Oka-Merck)</strain>
    </source>
</reference>
<dbReference type="EMBL" id="AF206304">
    <property type="protein sequence ID" value="AAF61658.1"/>
    <property type="molecule type" value="Genomic_DNA"/>
</dbReference>
<dbReference type="EMBL" id="AB097932">
    <property type="status" value="NOT_ANNOTATED_CDS"/>
    <property type="molecule type" value="Genomic_DNA"/>
</dbReference>
<dbReference type="EMBL" id="AB097933">
    <property type="status" value="NOT_ANNOTATED_CDS"/>
    <property type="molecule type" value="Genomic_DNA"/>
</dbReference>
<dbReference type="EMBL" id="DQ008354">
    <property type="protein sequence ID" value="AAY57666.1"/>
    <property type="molecule type" value="Genomic_DNA"/>
</dbReference>
<dbReference type="EMBL" id="DQ008355">
    <property type="protein sequence ID" value="AAY57737.1"/>
    <property type="molecule type" value="Genomic_DNA"/>
</dbReference>
<dbReference type="RefSeq" id="NP_040179.1">
    <property type="nucleotide sequence ID" value="NC_001348.1"/>
</dbReference>
<dbReference type="IntAct" id="Q77NN9">
    <property type="interactions" value="12"/>
</dbReference>
<dbReference type="MINT" id="Q77NN9"/>
<dbReference type="GeneID" id="1487684"/>
<dbReference type="KEGG" id="vg:1487684"/>
<dbReference type="Proteomes" id="UP000002603">
    <property type="component" value="Genome"/>
</dbReference>
<dbReference type="Proteomes" id="UP000008504">
    <property type="component" value="Genome"/>
</dbReference>
<dbReference type="Proteomes" id="UP000008505">
    <property type="component" value="Genome"/>
</dbReference>
<dbReference type="Proteomes" id="UP000008506">
    <property type="component" value="Genome"/>
</dbReference>
<proteinExistence type="inferred from homology"/>
<feature type="chain" id="PRO_0000385146" description="Uncharacterized protein 57">
    <location>
        <begin position="1"/>
        <end position="71"/>
    </location>
</feature>
<feature type="sequence variant" description="In strain: Oka varicella vaccine VarilRix (V-Oka-GSK) and Oka varicella vaccine Varivax (V-Oka-Merk).">
    <original>H</original>
    <variation>P</variation>
    <location>
        <position position="69"/>
    </location>
</feature>